<gene>
    <name type="primary">H2B.3</name>
    <name type="ORF">OsI_000386</name>
</gene>
<comment type="function">
    <text>Core component of nucleosome. Nucleosomes wrap and compact DNA into chromatin, limiting DNA accessibility to the cellular machineries which require DNA as a template. Histones thereby play a central role in transcription regulation, DNA repair, DNA replication and chromosomal stability. DNA accessibility is regulated via a complex set of post-translational modifications of histones, also called histone code, and nucleosome remodeling.</text>
</comment>
<comment type="subunit">
    <text>The nucleosome is a histone octamer containing two molecules each of H2A, H2B, H3 and H4 assembled in one H3-H4 heterotetramer and two H2A-H2B heterodimers. The octamer wraps approximately 147 bp of DNA.</text>
</comment>
<comment type="subcellular location">
    <subcellularLocation>
        <location evidence="1">Nucleus</location>
    </subcellularLocation>
    <subcellularLocation>
        <location evidence="1">Chromosome</location>
    </subcellularLocation>
</comment>
<comment type="PTM">
    <text evidence="1">Can be acetylated to form H2BK6ac and H2BK33ac.</text>
</comment>
<comment type="PTM">
    <text evidence="1">Monoubiquitinated by BRE1 to form H2BK143ub1 and deubiquitinated by UBP26. Required for heterochromatic histone H3 di- and trimethylation at H3K4me. May give a specific tag for epigenetic transcriptional activation (By similarity).</text>
</comment>
<comment type="similarity">
    <text evidence="3">Belongs to the histone H2B family.</text>
</comment>
<comment type="caution">
    <text evidence="3">To ensure consistency between histone entries, we follow the 'Brno' nomenclature for histone modifications, with positions referring to those used in the literature for the 'closest' model organism. Due to slight variations in histone sequences between organisms and to the presence of initiator methionine in UniProtKB/Swiss-Prot sequences, the actual positions of modified amino acids in the sequence generally differ. In this entry the following conventions are used: H2BK6ac = acetylated Lys-7; H2BK33ac = acetylated Lys-37; H2BK143ub1 = monoubiquitinated Lys-149.</text>
</comment>
<feature type="initiator methionine" description="Removed" evidence="1">
    <location>
        <position position="1"/>
    </location>
</feature>
<feature type="chain" id="PRO_0000294180" description="Histone H2B.3">
    <location>
        <begin position="2"/>
        <end position="153"/>
    </location>
</feature>
<feature type="region of interest" description="Disordered" evidence="2">
    <location>
        <begin position="1"/>
        <end position="61"/>
    </location>
</feature>
<feature type="compositionally biased region" description="Basic and acidic residues" evidence="2">
    <location>
        <begin position="1"/>
        <end position="28"/>
    </location>
</feature>
<feature type="compositionally biased region" description="Basic and acidic residues" evidence="2">
    <location>
        <begin position="36"/>
        <end position="53"/>
    </location>
</feature>
<feature type="modified residue" description="N6-acetyllysine" evidence="1">
    <location>
        <position position="7"/>
    </location>
</feature>
<feature type="modified residue" description="N6-acetyllysine" evidence="1">
    <location>
        <position position="37"/>
    </location>
</feature>
<feature type="cross-link" description="Glycyl lysine isopeptide (Lys-Gly) (interchain with G-Cter in ubiquitin)" evidence="1">
    <location>
        <position position="149"/>
    </location>
</feature>
<protein>
    <recommendedName>
        <fullName>Histone H2B.3</fullName>
    </recommendedName>
</protein>
<proteinExistence type="inferred from homology"/>
<name>H2B3_ORYSI</name>
<accession>A2WKP3</accession>
<organism>
    <name type="scientific">Oryza sativa subsp. indica</name>
    <name type="common">Rice</name>
    <dbReference type="NCBI Taxonomy" id="39946"/>
    <lineage>
        <taxon>Eukaryota</taxon>
        <taxon>Viridiplantae</taxon>
        <taxon>Streptophyta</taxon>
        <taxon>Embryophyta</taxon>
        <taxon>Tracheophyta</taxon>
        <taxon>Spermatophyta</taxon>
        <taxon>Magnoliopsida</taxon>
        <taxon>Liliopsida</taxon>
        <taxon>Poales</taxon>
        <taxon>Poaceae</taxon>
        <taxon>BOP clade</taxon>
        <taxon>Oryzoideae</taxon>
        <taxon>Oryzeae</taxon>
        <taxon>Oryzinae</taxon>
        <taxon>Oryza</taxon>
        <taxon>Oryza sativa</taxon>
    </lineage>
</organism>
<reference key="1">
    <citation type="journal article" date="2005" name="PLoS Biol.">
        <title>The genomes of Oryza sativa: a history of duplications.</title>
        <authorList>
            <person name="Yu J."/>
            <person name="Wang J."/>
            <person name="Lin W."/>
            <person name="Li S."/>
            <person name="Li H."/>
            <person name="Zhou J."/>
            <person name="Ni P."/>
            <person name="Dong W."/>
            <person name="Hu S."/>
            <person name="Zeng C."/>
            <person name="Zhang J."/>
            <person name="Zhang Y."/>
            <person name="Li R."/>
            <person name="Xu Z."/>
            <person name="Li S."/>
            <person name="Li X."/>
            <person name="Zheng H."/>
            <person name="Cong L."/>
            <person name="Lin L."/>
            <person name="Yin J."/>
            <person name="Geng J."/>
            <person name="Li G."/>
            <person name="Shi J."/>
            <person name="Liu J."/>
            <person name="Lv H."/>
            <person name="Li J."/>
            <person name="Wang J."/>
            <person name="Deng Y."/>
            <person name="Ran L."/>
            <person name="Shi X."/>
            <person name="Wang X."/>
            <person name="Wu Q."/>
            <person name="Li C."/>
            <person name="Ren X."/>
            <person name="Wang J."/>
            <person name="Wang X."/>
            <person name="Li D."/>
            <person name="Liu D."/>
            <person name="Zhang X."/>
            <person name="Ji Z."/>
            <person name="Zhao W."/>
            <person name="Sun Y."/>
            <person name="Zhang Z."/>
            <person name="Bao J."/>
            <person name="Han Y."/>
            <person name="Dong L."/>
            <person name="Ji J."/>
            <person name="Chen P."/>
            <person name="Wu S."/>
            <person name="Liu J."/>
            <person name="Xiao Y."/>
            <person name="Bu D."/>
            <person name="Tan J."/>
            <person name="Yang L."/>
            <person name="Ye C."/>
            <person name="Zhang J."/>
            <person name="Xu J."/>
            <person name="Zhou Y."/>
            <person name="Yu Y."/>
            <person name="Zhang B."/>
            <person name="Zhuang S."/>
            <person name="Wei H."/>
            <person name="Liu B."/>
            <person name="Lei M."/>
            <person name="Yu H."/>
            <person name="Li Y."/>
            <person name="Xu H."/>
            <person name="Wei S."/>
            <person name="He X."/>
            <person name="Fang L."/>
            <person name="Zhang Z."/>
            <person name="Zhang Y."/>
            <person name="Huang X."/>
            <person name="Su Z."/>
            <person name="Tong W."/>
            <person name="Li J."/>
            <person name="Tong Z."/>
            <person name="Li S."/>
            <person name="Ye J."/>
            <person name="Wang L."/>
            <person name="Fang L."/>
            <person name="Lei T."/>
            <person name="Chen C.-S."/>
            <person name="Chen H.-C."/>
            <person name="Xu Z."/>
            <person name="Li H."/>
            <person name="Huang H."/>
            <person name="Zhang F."/>
            <person name="Xu H."/>
            <person name="Li N."/>
            <person name="Zhao C."/>
            <person name="Li S."/>
            <person name="Dong L."/>
            <person name="Huang Y."/>
            <person name="Li L."/>
            <person name="Xi Y."/>
            <person name="Qi Q."/>
            <person name="Li W."/>
            <person name="Zhang B."/>
            <person name="Hu W."/>
            <person name="Zhang Y."/>
            <person name="Tian X."/>
            <person name="Jiao Y."/>
            <person name="Liang X."/>
            <person name="Jin J."/>
            <person name="Gao L."/>
            <person name="Zheng W."/>
            <person name="Hao B."/>
            <person name="Liu S.-M."/>
            <person name="Wang W."/>
            <person name="Yuan L."/>
            <person name="Cao M."/>
            <person name="McDermott J."/>
            <person name="Samudrala R."/>
            <person name="Wang J."/>
            <person name="Wong G.K.-S."/>
            <person name="Yang H."/>
        </authorList>
    </citation>
    <scope>NUCLEOTIDE SEQUENCE [LARGE SCALE GENOMIC DNA]</scope>
    <source>
        <strain>cv. 93-11</strain>
    </source>
</reference>
<dbReference type="EMBL" id="CM000126">
    <property type="protein sequence ID" value="EAY72539.1"/>
    <property type="molecule type" value="Genomic_DNA"/>
</dbReference>
<dbReference type="SMR" id="A2WKP3"/>
<dbReference type="STRING" id="39946.A2WKP3"/>
<dbReference type="EnsemblPlants" id="BGIOSGA002784-TA">
    <property type="protein sequence ID" value="BGIOSGA002784-PA"/>
    <property type="gene ID" value="BGIOSGA002784"/>
</dbReference>
<dbReference type="EnsemblPlants" id="OsMH63_01G003550_01">
    <property type="protein sequence ID" value="OsMH63_01G003550_01"/>
    <property type="gene ID" value="OsMH63_01G003550"/>
</dbReference>
<dbReference type="EnsemblPlants" id="OsPr106_01g0003430.01">
    <property type="protein sequence ID" value="OsPr106_01g0003430.01"/>
    <property type="gene ID" value="OsPr106_01g0003430"/>
</dbReference>
<dbReference type="Gramene" id="BGIOSGA002784-TA">
    <property type="protein sequence ID" value="BGIOSGA002784-PA"/>
    <property type="gene ID" value="BGIOSGA002784"/>
</dbReference>
<dbReference type="Gramene" id="OsMH63_01G003550_01">
    <property type="protein sequence ID" value="OsMH63_01G003550_01"/>
    <property type="gene ID" value="OsMH63_01G003550"/>
</dbReference>
<dbReference type="Gramene" id="OsPr106_01g0003430.01">
    <property type="protein sequence ID" value="OsPr106_01g0003430.01"/>
    <property type="gene ID" value="OsPr106_01g0003430"/>
</dbReference>
<dbReference type="HOGENOM" id="CLU_075666_1_0_1"/>
<dbReference type="OMA" id="HILFRHI"/>
<dbReference type="Proteomes" id="UP000007015">
    <property type="component" value="Chromosome 1"/>
</dbReference>
<dbReference type="GO" id="GO:0000786">
    <property type="term" value="C:nucleosome"/>
    <property type="evidence" value="ECO:0007669"/>
    <property type="project" value="UniProtKB-KW"/>
</dbReference>
<dbReference type="GO" id="GO:0005634">
    <property type="term" value="C:nucleus"/>
    <property type="evidence" value="ECO:0007669"/>
    <property type="project" value="UniProtKB-SubCell"/>
</dbReference>
<dbReference type="GO" id="GO:0003677">
    <property type="term" value="F:DNA binding"/>
    <property type="evidence" value="ECO:0007669"/>
    <property type="project" value="UniProtKB-KW"/>
</dbReference>
<dbReference type="GO" id="GO:0046982">
    <property type="term" value="F:protein heterodimerization activity"/>
    <property type="evidence" value="ECO:0007669"/>
    <property type="project" value="InterPro"/>
</dbReference>
<dbReference type="GO" id="GO:0030527">
    <property type="term" value="F:structural constituent of chromatin"/>
    <property type="evidence" value="ECO:0007669"/>
    <property type="project" value="InterPro"/>
</dbReference>
<dbReference type="CDD" id="cd22910">
    <property type="entry name" value="HFD_H2B"/>
    <property type="match status" value="1"/>
</dbReference>
<dbReference type="FunFam" id="1.10.20.10:FF:000014">
    <property type="entry name" value="Histone H2B"/>
    <property type="match status" value="1"/>
</dbReference>
<dbReference type="Gene3D" id="1.10.20.10">
    <property type="entry name" value="Histone, subunit A"/>
    <property type="match status" value="1"/>
</dbReference>
<dbReference type="InterPro" id="IPR009072">
    <property type="entry name" value="Histone-fold"/>
</dbReference>
<dbReference type="InterPro" id="IPR007125">
    <property type="entry name" value="Histone_H2A/H2B/H3"/>
</dbReference>
<dbReference type="InterPro" id="IPR000558">
    <property type="entry name" value="Histone_H2B"/>
</dbReference>
<dbReference type="InterPro" id="IPR055333">
    <property type="entry name" value="HISTONE_H2B_site"/>
</dbReference>
<dbReference type="PANTHER" id="PTHR23428">
    <property type="entry name" value="HISTONE H2B"/>
    <property type="match status" value="1"/>
</dbReference>
<dbReference type="Pfam" id="PF00125">
    <property type="entry name" value="Histone"/>
    <property type="match status" value="1"/>
</dbReference>
<dbReference type="PRINTS" id="PR00621">
    <property type="entry name" value="HISTONEH2B"/>
</dbReference>
<dbReference type="SMART" id="SM00427">
    <property type="entry name" value="H2B"/>
    <property type="match status" value="1"/>
</dbReference>
<dbReference type="SUPFAM" id="SSF47113">
    <property type="entry name" value="Histone-fold"/>
    <property type="match status" value="1"/>
</dbReference>
<dbReference type="PROSITE" id="PS00357">
    <property type="entry name" value="HISTONE_H2B"/>
    <property type="match status" value="1"/>
</dbReference>
<keyword id="KW-0007">Acetylation</keyword>
<keyword id="KW-0158">Chromosome</keyword>
<keyword id="KW-0238">DNA-binding</keyword>
<keyword id="KW-1017">Isopeptide bond</keyword>
<keyword id="KW-0544">Nucleosome core</keyword>
<keyword id="KW-0539">Nucleus</keyword>
<keyword id="KW-1185">Reference proteome</keyword>
<keyword id="KW-0832">Ubl conjugation</keyword>
<evidence type="ECO:0000250" key="1"/>
<evidence type="ECO:0000256" key="2">
    <source>
        <dbReference type="SAM" id="MobiDB-lite"/>
    </source>
</evidence>
<evidence type="ECO:0000305" key="3"/>
<sequence length="153" mass="16546">MAPKAEKKPAAKKPAEEEPAAEKAEKALAGKKPKAEKRLPAGKAEKGSGEGRKAGRKKAKKSVETYKIYIFKVLKQVHPDIGISSKAMSIMNSFINDIFEKLAGESAKLARYNKKPTITSREIQTSVRLVLPGELAKHAVSEGTKAVTKFTSA</sequence>